<feature type="chain" id="PRO_0000148323" description="Putative transport protein TM_1349">
    <location>
        <begin position="1"/>
        <end position="338"/>
    </location>
</feature>
<feature type="transmembrane region" description="Helical" evidence="1">
    <location>
        <begin position="20"/>
        <end position="40"/>
    </location>
</feature>
<feature type="transmembrane region" description="Helical" evidence="1">
    <location>
        <begin position="68"/>
        <end position="88"/>
    </location>
</feature>
<feature type="transmembrane region" description="Helical" evidence="1">
    <location>
        <begin position="147"/>
        <end position="167"/>
    </location>
</feature>
<feature type="transmembrane region" description="Helical" evidence="1">
    <location>
        <begin position="203"/>
        <end position="223"/>
    </location>
</feature>
<feature type="transmembrane region" description="Helical" evidence="1">
    <location>
        <begin position="239"/>
        <end position="259"/>
    </location>
</feature>
<feature type="transmembrane region" description="Helical" evidence="1">
    <location>
        <begin position="263"/>
        <end position="283"/>
    </location>
</feature>
<feature type="transmembrane region" description="Helical" evidence="1">
    <location>
        <begin position="297"/>
        <end position="317"/>
    </location>
</feature>
<dbReference type="EMBL" id="AE000512">
    <property type="protein sequence ID" value="AAD36420.1"/>
    <property type="molecule type" value="Genomic_DNA"/>
</dbReference>
<dbReference type="PIR" id="E72264">
    <property type="entry name" value="E72264"/>
</dbReference>
<dbReference type="RefSeq" id="NP_229150.1">
    <property type="nucleotide sequence ID" value="NC_000853.1"/>
</dbReference>
<dbReference type="RefSeq" id="WP_004081545.1">
    <property type="nucleotide sequence ID" value="NZ_CP011107.1"/>
</dbReference>
<dbReference type="SMR" id="Q9X170"/>
<dbReference type="STRING" id="243274.TM_1349"/>
<dbReference type="PaxDb" id="243274-THEMA_07595"/>
<dbReference type="EnsemblBacteria" id="AAD36420">
    <property type="protein sequence ID" value="AAD36420"/>
    <property type="gene ID" value="TM_1349"/>
</dbReference>
<dbReference type="KEGG" id="tma:TM1349"/>
<dbReference type="KEGG" id="tmi:THEMA_07595"/>
<dbReference type="KEGG" id="tmm:Tmari_1356"/>
<dbReference type="KEGG" id="tmw:THMA_1374"/>
<dbReference type="eggNOG" id="COG0628">
    <property type="taxonomic scope" value="Bacteria"/>
</dbReference>
<dbReference type="InParanoid" id="Q9X170"/>
<dbReference type="OrthoDB" id="40228at2"/>
<dbReference type="Proteomes" id="UP000008183">
    <property type="component" value="Chromosome"/>
</dbReference>
<dbReference type="GO" id="GO:0005886">
    <property type="term" value="C:plasma membrane"/>
    <property type="evidence" value="ECO:0007669"/>
    <property type="project" value="UniProtKB-SubCell"/>
</dbReference>
<dbReference type="GO" id="GO:0055085">
    <property type="term" value="P:transmembrane transport"/>
    <property type="evidence" value="ECO:0000318"/>
    <property type="project" value="GO_Central"/>
</dbReference>
<dbReference type="InterPro" id="IPR002549">
    <property type="entry name" value="AI-2E-like"/>
</dbReference>
<dbReference type="PANTHER" id="PTHR21716:SF53">
    <property type="entry name" value="PERMEASE PERM-RELATED"/>
    <property type="match status" value="1"/>
</dbReference>
<dbReference type="PANTHER" id="PTHR21716">
    <property type="entry name" value="TRANSMEMBRANE PROTEIN"/>
    <property type="match status" value="1"/>
</dbReference>
<dbReference type="Pfam" id="PF01594">
    <property type="entry name" value="AI-2E_transport"/>
    <property type="match status" value="1"/>
</dbReference>
<name>Y1349_THEMA</name>
<sequence>MKEFRKILEDKAFFFTTLYILISFLVFKIFPDVFAVIVLMVFFTLLLDPVIRFLEKLKFGKYFSRVAALLLFFFVMVYSLYMIIPPVFNEFGSFIEFMTKVFESKIWKDYIKSPELMPVFDKIMNFLEPKLTDFLNYVFSLVTTNFVSVTTIIVFTLFGLGYTVFYIREIASFFVLIYPKSVRAEAREFFRDVYASMGRYIRVIFINAVIIGLSYWIVFEAFNLKYSAIISLWAFVTNFIPIVGVVLEYIPVLLFSLTLGVKGVLLIALFAILIHAVAFVVFIQLMKGLEKLNPVYIILSILFFGKLFGLFGSFVGVPLALFFKVFWRKFLRPLFEAG</sequence>
<proteinExistence type="inferred from homology"/>
<comment type="subcellular location">
    <subcellularLocation>
        <location evidence="2">Cell membrane</location>
        <topology evidence="2">Multi-pass membrane protein</topology>
    </subcellularLocation>
</comment>
<comment type="similarity">
    <text evidence="2">Belongs to the autoinducer-2 exporter (AI-2E) (TC 2.A.86) family.</text>
</comment>
<organism>
    <name type="scientific">Thermotoga maritima (strain ATCC 43589 / DSM 3109 / JCM 10099 / NBRC 100826 / MSB8)</name>
    <dbReference type="NCBI Taxonomy" id="243274"/>
    <lineage>
        <taxon>Bacteria</taxon>
        <taxon>Thermotogati</taxon>
        <taxon>Thermotogota</taxon>
        <taxon>Thermotogae</taxon>
        <taxon>Thermotogales</taxon>
        <taxon>Thermotogaceae</taxon>
        <taxon>Thermotoga</taxon>
    </lineage>
</organism>
<gene>
    <name type="ordered locus">TM_1349</name>
</gene>
<accession>Q9X170</accession>
<protein>
    <recommendedName>
        <fullName>Putative transport protein TM_1349</fullName>
    </recommendedName>
</protein>
<keyword id="KW-1003">Cell membrane</keyword>
<keyword id="KW-0472">Membrane</keyword>
<keyword id="KW-1185">Reference proteome</keyword>
<keyword id="KW-0812">Transmembrane</keyword>
<keyword id="KW-1133">Transmembrane helix</keyword>
<keyword id="KW-0813">Transport</keyword>
<evidence type="ECO:0000255" key="1"/>
<evidence type="ECO:0000305" key="2"/>
<reference key="1">
    <citation type="journal article" date="1999" name="Nature">
        <title>Evidence for lateral gene transfer between Archaea and Bacteria from genome sequence of Thermotoga maritima.</title>
        <authorList>
            <person name="Nelson K.E."/>
            <person name="Clayton R.A."/>
            <person name="Gill S.R."/>
            <person name="Gwinn M.L."/>
            <person name="Dodson R.J."/>
            <person name="Haft D.H."/>
            <person name="Hickey E.K."/>
            <person name="Peterson J.D."/>
            <person name="Nelson W.C."/>
            <person name="Ketchum K.A."/>
            <person name="McDonald L.A."/>
            <person name="Utterback T.R."/>
            <person name="Malek J.A."/>
            <person name="Linher K.D."/>
            <person name="Garrett M.M."/>
            <person name="Stewart A.M."/>
            <person name="Cotton M.D."/>
            <person name="Pratt M.S."/>
            <person name="Phillips C.A."/>
            <person name="Richardson D.L."/>
            <person name="Heidelberg J.F."/>
            <person name="Sutton G.G."/>
            <person name="Fleischmann R.D."/>
            <person name="Eisen J.A."/>
            <person name="White O."/>
            <person name="Salzberg S.L."/>
            <person name="Smith H.O."/>
            <person name="Venter J.C."/>
            <person name="Fraser C.M."/>
        </authorList>
    </citation>
    <scope>NUCLEOTIDE SEQUENCE [LARGE SCALE GENOMIC DNA]</scope>
    <source>
        <strain>ATCC 43589 / DSM 3109 / JCM 10099 / NBRC 100826 / MSB8</strain>
    </source>
</reference>